<reference key="1">
    <citation type="journal article" date="1994" name="Virology">
        <title>The complete DNA sequence of Autographa californica nuclear polyhedrosis virus.</title>
        <authorList>
            <person name="Ayres M.D."/>
            <person name="Howard S.C."/>
            <person name="Kuzio J."/>
            <person name="Lopez-Ferber M."/>
            <person name="Possee R.D."/>
        </authorList>
    </citation>
    <scope>NUCLEOTIDE SEQUENCE [LARGE SCALE GENOMIC DNA]</scope>
    <source>
        <strain>C6</strain>
    </source>
</reference>
<reference key="2">
    <citation type="journal article" date="1992" name="Virology">
        <title>Sequence, genomic organization of the EcoRI-A fragment of Autographa californica nuclear polyhedrosis virus, and identification of a viral-encoded protein resembling the outer capsid protein VP8 of rotavirus.</title>
        <authorList>
            <person name="Braunagel S.C."/>
            <person name="Daniel K.D."/>
            <person name="Reilly L.M."/>
            <person name="Guarino L.A."/>
            <person name="Hong T."/>
            <person name="Summers M.D."/>
        </authorList>
    </citation>
    <scope>NUCLEOTIDE SEQUENCE [GENOMIC DNA]</scope>
    <source>
        <strain>E2</strain>
    </source>
</reference>
<reference key="3">
    <citation type="journal article" date="2005" name="J. Virol.">
        <title>Specific binding of Autographa californica M nucleopolyhedrovirus occlusion-derived virus to midgut cells of Heliothis virescens larvae is mediated by products of pif genes Ac119 and Ac022 but not by Ac115.</title>
        <authorList>
            <person name="Ohkawa T."/>
            <person name="Washburn J.O."/>
            <person name="Sitapara R."/>
            <person name="Sid E."/>
            <person name="Volkman L.E."/>
        </authorList>
    </citation>
    <scope>FUNCTION</scope>
</reference>
<reference key="4">
    <citation type="journal article" date="2010" name="J. Virol.">
        <title>Baculovirus per os infectivity factors form a complex on the surface of occlusion-derived virus.</title>
        <authorList>
            <person name="Peng K."/>
            <person name="van Oers M.M."/>
            <person name="Hu Z."/>
            <person name="van Lent J.W."/>
            <person name="Vlak J.M."/>
        </authorList>
    </citation>
    <scope>INTERACTION WITH PIF1; PIF3 AND PIF0</scope>
</reference>
<proteinExistence type="evidence at protein level"/>
<accession>P41427</accession>
<organism>
    <name type="scientific">Autographa californica nuclear polyhedrosis virus</name>
    <name type="common">AcMNPV</name>
    <dbReference type="NCBI Taxonomy" id="46015"/>
    <lineage>
        <taxon>Viruses</taxon>
        <taxon>Viruses incertae sedis</taxon>
        <taxon>Naldaviricetes</taxon>
        <taxon>Lefavirales</taxon>
        <taxon>Baculoviridae</taxon>
        <taxon>Alphabaculovirus</taxon>
        <taxon>Alphabaculovirus aucalifornicae</taxon>
    </lineage>
</organism>
<keyword id="KW-1185">Reference proteome</keyword>
<comment type="function">
    <text>Per os infectivity factor that mediates the specific binding of occluded virions (ODV) to the host midgut target cells.</text>
</comment>
<comment type="subunit">
    <text evidence="1">Forms the PIF complex together with PIF1 and PIF3. The complex also interacts with per os infectivity factor PIF0.</text>
</comment>
<comment type="sequence caution" evidence="2">
    <conflict type="frameshift">
        <sequence resource="EMBL-CDS" id="AAA66792"/>
    </conflict>
</comment>
<name>PIF2_NPVAC</name>
<protein>
    <recommendedName>
        <fullName>Per os infectivity factor 2</fullName>
        <shortName>PIF2</shortName>
    </recommendedName>
    <alternativeName>
        <fullName>ORF 8/6</fullName>
    </alternativeName>
</protein>
<evidence type="ECO:0000269" key="1">
    <source>
    </source>
</evidence>
<evidence type="ECO:0000305" key="2"/>
<organismHost>
    <name type="scientific">Lepidoptera</name>
    <name type="common">butterflies and moths</name>
    <dbReference type="NCBI Taxonomy" id="7088"/>
</organismHost>
<feature type="chain" id="PRO_0000132957" description="Per os infectivity factor 2">
    <location>
        <begin position="1"/>
        <end position="382"/>
    </location>
</feature>
<sequence>MYRVLIVFFLFVFLYIVYQPFYQAYLHIGHAQQDYNDTLDDRMDYIESVMRRRHYVPIEALPAIRFDTNLGTLAGDTIKCMSVPLFVSDIDLPMFDCSQICDNPSAAYFFVNETDVFVVNGHRLTVGGYCSTNSLPRNCNRETSVILMSLNQWTCIAEDPRYYAGTDNMTQLAGRQHFDRIMPGQSDRNVLFDRLLGREVNVTTNTFRRSWDELLEDGTRRFEMRCNARDNNNNLMFVNPLNPLECLPNVCTNVSNVHTSVRPVFETGECDCGDEAVTRVTHIVPGDRTSMCASIIDGLDKSTASYRYRVECVNLYTSILNYSNNKLLCPSDTFDSNTDAAFAFEVPGSYPLSRNGINEPTYRFYLDTRSRVNYNDVRGQLS</sequence>
<dbReference type="EMBL" id="L22858">
    <property type="protein sequence ID" value="AAA66652.1"/>
    <property type="molecule type" value="Genomic_DNA"/>
</dbReference>
<dbReference type="EMBL" id="M96361">
    <property type="protein sequence ID" value="AAA66792.1"/>
    <property type="status" value="ALT_SEQ"/>
    <property type="molecule type" value="Genomic_DNA"/>
</dbReference>
<dbReference type="PIR" id="F72852">
    <property type="entry name" value="F72852"/>
</dbReference>
<dbReference type="PIR" id="H44221">
    <property type="entry name" value="H44221"/>
</dbReference>
<dbReference type="RefSeq" id="NP_054051.1">
    <property type="nucleotide sequence ID" value="NC_001623.1"/>
</dbReference>
<dbReference type="GeneID" id="1403854"/>
<dbReference type="KEGG" id="vg:1403854"/>
<dbReference type="OrthoDB" id="7191at10239"/>
<dbReference type="Proteomes" id="UP000008292">
    <property type="component" value="Segment"/>
</dbReference>
<dbReference type="InterPro" id="IPR006725">
    <property type="entry name" value="PIF2"/>
</dbReference>
<dbReference type="Pfam" id="PF04631">
    <property type="entry name" value="PIF2"/>
    <property type="match status" value="1"/>
</dbReference>